<accession>A5VU45</accession>
<name>MINE_BRUO2</name>
<keyword id="KW-0131">Cell cycle</keyword>
<keyword id="KW-0132">Cell division</keyword>
<protein>
    <recommendedName>
        <fullName evidence="1">Cell division topological specificity factor</fullName>
    </recommendedName>
</protein>
<evidence type="ECO:0000255" key="1">
    <source>
        <dbReference type="HAMAP-Rule" id="MF_00262"/>
    </source>
</evidence>
<feature type="chain" id="PRO_1000047773" description="Cell division topological specificity factor">
    <location>
        <begin position="1"/>
        <end position="90"/>
    </location>
</feature>
<gene>
    <name evidence="1" type="primary">minE</name>
    <name type="ordered locus">BOV_A0296</name>
</gene>
<organism>
    <name type="scientific">Brucella ovis (strain ATCC 25840 / 63/290 / NCTC 10512)</name>
    <dbReference type="NCBI Taxonomy" id="444178"/>
    <lineage>
        <taxon>Bacteria</taxon>
        <taxon>Pseudomonadati</taxon>
        <taxon>Pseudomonadota</taxon>
        <taxon>Alphaproteobacteria</taxon>
        <taxon>Hyphomicrobiales</taxon>
        <taxon>Brucellaceae</taxon>
        <taxon>Brucella/Ochrobactrum group</taxon>
        <taxon>Brucella</taxon>
    </lineage>
</organism>
<dbReference type="EMBL" id="CP000709">
    <property type="protein sequence ID" value="ABQ62150.1"/>
    <property type="molecule type" value="Genomic_DNA"/>
</dbReference>
<dbReference type="RefSeq" id="WP_002966267.1">
    <property type="nucleotide sequence ID" value="NC_009504.1"/>
</dbReference>
<dbReference type="SMR" id="A5VU45"/>
<dbReference type="GeneID" id="97535514"/>
<dbReference type="KEGG" id="bov:BOV_A0296"/>
<dbReference type="HOGENOM" id="CLU_137929_2_0_5"/>
<dbReference type="Proteomes" id="UP000006383">
    <property type="component" value="Chromosome II"/>
</dbReference>
<dbReference type="GO" id="GO:0051301">
    <property type="term" value="P:cell division"/>
    <property type="evidence" value="ECO:0007669"/>
    <property type="project" value="UniProtKB-KW"/>
</dbReference>
<dbReference type="GO" id="GO:0032955">
    <property type="term" value="P:regulation of division septum assembly"/>
    <property type="evidence" value="ECO:0007669"/>
    <property type="project" value="InterPro"/>
</dbReference>
<dbReference type="Gene3D" id="3.30.1070.10">
    <property type="entry name" value="Cell division topological specificity factor MinE"/>
    <property type="match status" value="1"/>
</dbReference>
<dbReference type="HAMAP" id="MF_00262">
    <property type="entry name" value="MinE"/>
    <property type="match status" value="1"/>
</dbReference>
<dbReference type="InterPro" id="IPR005527">
    <property type="entry name" value="MinE"/>
</dbReference>
<dbReference type="InterPro" id="IPR036707">
    <property type="entry name" value="MinE_sf"/>
</dbReference>
<dbReference type="NCBIfam" id="TIGR01215">
    <property type="entry name" value="minE"/>
    <property type="match status" value="1"/>
</dbReference>
<dbReference type="NCBIfam" id="NF001422">
    <property type="entry name" value="PRK00296.1"/>
    <property type="match status" value="1"/>
</dbReference>
<dbReference type="Pfam" id="PF03776">
    <property type="entry name" value="MinE"/>
    <property type="match status" value="1"/>
</dbReference>
<dbReference type="SUPFAM" id="SSF55229">
    <property type="entry name" value="Cell division protein MinE topological specificity domain"/>
    <property type="match status" value="1"/>
</dbReference>
<proteinExistence type="inferred from homology"/>
<comment type="function">
    <text evidence="1">Prevents the cell division inhibition by proteins MinC and MinD at internal division sites while permitting inhibition at polar sites. This ensures cell division at the proper site by restricting the formation of a division septum at the midpoint of the long axis of the cell.</text>
</comment>
<comment type="similarity">
    <text evidence="1">Belongs to the MinE family.</text>
</comment>
<reference key="1">
    <citation type="journal article" date="2009" name="PLoS ONE">
        <title>Genome degradation in Brucella ovis corresponds with narrowing of its host range and tissue tropism.</title>
        <authorList>
            <person name="Tsolis R.M."/>
            <person name="Seshadri R."/>
            <person name="Santos R.L."/>
            <person name="Sangari F.J."/>
            <person name="Lobo J.M."/>
            <person name="de Jong M.F."/>
            <person name="Ren Q."/>
            <person name="Myers G."/>
            <person name="Brinkac L.M."/>
            <person name="Nelson W.C."/>
            <person name="Deboy R.T."/>
            <person name="Angiuoli S."/>
            <person name="Khouri H."/>
            <person name="Dimitrov G."/>
            <person name="Robinson J.R."/>
            <person name="Mulligan S."/>
            <person name="Walker R.L."/>
            <person name="Elzer P.E."/>
            <person name="Hassan K.A."/>
            <person name="Paulsen I.T."/>
        </authorList>
    </citation>
    <scope>NUCLEOTIDE SEQUENCE [LARGE SCALE GENOMIC DNA]</scope>
    <source>
        <strain>ATCC 25840 / 63/290 / NCTC 10512</strain>
    </source>
</reference>
<sequence>MSIFRFFTRQQASAPQARERLQVLLAHERASYGGQSDLVAVLREEILAVIAKHIKVDREKVSVKMDRGDQVSTLEVDIELPLTAKKGRAA</sequence>